<evidence type="ECO:0000255" key="1">
    <source>
        <dbReference type="HAMAP-Rule" id="MF_01357"/>
    </source>
</evidence>
<reference key="1">
    <citation type="journal article" date="2001" name="Science">
        <title>Genome sequence of the plant pathogen and biotechnology agent Agrobacterium tumefaciens C58.</title>
        <authorList>
            <person name="Goodner B."/>
            <person name="Hinkle G."/>
            <person name="Gattung S."/>
            <person name="Miller N."/>
            <person name="Blanchard M."/>
            <person name="Qurollo B."/>
            <person name="Goldman B.S."/>
            <person name="Cao Y."/>
            <person name="Askenazi M."/>
            <person name="Halling C."/>
            <person name="Mullin L."/>
            <person name="Houmiel K."/>
            <person name="Gordon J."/>
            <person name="Vaudin M."/>
            <person name="Iartchouk O."/>
            <person name="Epp A."/>
            <person name="Liu F."/>
            <person name="Wollam C."/>
            <person name="Allinger M."/>
            <person name="Doughty D."/>
            <person name="Scott C."/>
            <person name="Lappas C."/>
            <person name="Markelz B."/>
            <person name="Flanagan C."/>
            <person name="Crowell C."/>
            <person name="Gurson J."/>
            <person name="Lomo C."/>
            <person name="Sear C."/>
            <person name="Strub G."/>
            <person name="Cielo C."/>
            <person name="Slater S."/>
        </authorList>
    </citation>
    <scope>NUCLEOTIDE SEQUENCE [LARGE SCALE GENOMIC DNA]</scope>
    <source>
        <strain>C58 / ATCC 33970</strain>
    </source>
</reference>
<reference key="2">
    <citation type="journal article" date="2001" name="Science">
        <title>The genome of the natural genetic engineer Agrobacterium tumefaciens C58.</title>
        <authorList>
            <person name="Wood D.W."/>
            <person name="Setubal J.C."/>
            <person name="Kaul R."/>
            <person name="Monks D.E."/>
            <person name="Kitajima J.P."/>
            <person name="Okura V.K."/>
            <person name="Zhou Y."/>
            <person name="Chen L."/>
            <person name="Wood G.E."/>
            <person name="Almeida N.F. Jr."/>
            <person name="Woo L."/>
            <person name="Chen Y."/>
            <person name="Paulsen I.T."/>
            <person name="Eisen J.A."/>
            <person name="Karp P.D."/>
            <person name="Bovee D. Sr."/>
            <person name="Chapman P."/>
            <person name="Clendenning J."/>
            <person name="Deatherage G."/>
            <person name="Gillet W."/>
            <person name="Grant C."/>
            <person name="Kutyavin T."/>
            <person name="Levy R."/>
            <person name="Li M.-J."/>
            <person name="McClelland E."/>
            <person name="Palmieri A."/>
            <person name="Raymond C."/>
            <person name="Rouse G."/>
            <person name="Saenphimmachak C."/>
            <person name="Wu Z."/>
            <person name="Romero P."/>
            <person name="Gordon D."/>
            <person name="Zhang S."/>
            <person name="Yoo H."/>
            <person name="Tao Y."/>
            <person name="Biddle P."/>
            <person name="Jung M."/>
            <person name="Krespan W."/>
            <person name="Perry M."/>
            <person name="Gordon-Kamm B."/>
            <person name="Liao L."/>
            <person name="Kim S."/>
            <person name="Hendrick C."/>
            <person name="Zhao Z.-Y."/>
            <person name="Dolan M."/>
            <person name="Chumley F."/>
            <person name="Tingey S.V."/>
            <person name="Tomb J.-F."/>
            <person name="Gordon M.P."/>
            <person name="Olson M.V."/>
            <person name="Nester E.W."/>
        </authorList>
    </citation>
    <scope>NUCLEOTIDE SEQUENCE [LARGE SCALE GENOMIC DNA]</scope>
    <source>
        <strain>C58 / ATCC 33970</strain>
    </source>
</reference>
<organism>
    <name type="scientific">Agrobacterium fabrum (strain C58 / ATCC 33970)</name>
    <name type="common">Agrobacterium tumefaciens (strain C58)</name>
    <dbReference type="NCBI Taxonomy" id="176299"/>
    <lineage>
        <taxon>Bacteria</taxon>
        <taxon>Pseudomonadati</taxon>
        <taxon>Pseudomonadota</taxon>
        <taxon>Alphaproteobacteria</taxon>
        <taxon>Hyphomicrobiales</taxon>
        <taxon>Rhizobiaceae</taxon>
        <taxon>Rhizobium/Agrobacterium group</taxon>
        <taxon>Agrobacterium</taxon>
        <taxon>Agrobacterium tumefaciens complex</taxon>
    </lineage>
</organism>
<sequence length="200" mass="23111">MSEALNDLAAYVKEARGSLVVSADIAYGELTLNTTPENVIALLTFLRDDVQCGFVNIIDICGVDWPQREKRFDVVYHLLSPRQNLRVRIKLQVAEDEGVPSSTPVYMGAEWFEREAWDMYGIPFEGHKDLRRILTDYGFEGHPLRKDFPVTGFVEVRYDDVLKRVLYEPVELKQEFRNFDFLSPWEGTEYVLPGDEKAKQ</sequence>
<gene>
    <name evidence="1" type="primary">nuoC</name>
    <name type="ordered locus">Atu1270</name>
    <name type="ORF">AGR_C_2342</name>
</gene>
<comment type="function">
    <text evidence="1">NDH-1 shuttles electrons from NADH, via FMN and iron-sulfur (Fe-S) centers, to quinones in the respiratory chain. The immediate electron acceptor for the enzyme in this species is believed to be ubiquinone. Couples the redox reaction to proton translocation (for every two electrons transferred, four hydrogen ions are translocated across the cytoplasmic membrane), and thus conserves the redox energy in a proton gradient.</text>
</comment>
<comment type="catalytic activity">
    <reaction evidence="1">
        <text>a quinone + NADH + 5 H(+)(in) = a quinol + NAD(+) + 4 H(+)(out)</text>
        <dbReference type="Rhea" id="RHEA:57888"/>
        <dbReference type="ChEBI" id="CHEBI:15378"/>
        <dbReference type="ChEBI" id="CHEBI:24646"/>
        <dbReference type="ChEBI" id="CHEBI:57540"/>
        <dbReference type="ChEBI" id="CHEBI:57945"/>
        <dbReference type="ChEBI" id="CHEBI:132124"/>
    </reaction>
</comment>
<comment type="subunit">
    <text evidence="1">NDH-1 is composed of 14 different subunits. Subunits NuoB, C, D, E, F, and G constitute the peripheral sector of the complex.</text>
</comment>
<comment type="subcellular location">
    <subcellularLocation>
        <location evidence="1">Cell inner membrane</location>
        <topology evidence="1">Peripheral membrane protein</topology>
        <orientation evidence="1">Cytoplasmic side</orientation>
    </subcellularLocation>
</comment>
<comment type="similarity">
    <text evidence="1">Belongs to the complex I 30 kDa subunit family.</text>
</comment>
<accession>A9CJB1</accession>
<dbReference type="EC" id="7.1.1.-" evidence="1"/>
<dbReference type="EMBL" id="AE007869">
    <property type="protein sequence ID" value="AAK87065.1"/>
    <property type="molecule type" value="Genomic_DNA"/>
</dbReference>
<dbReference type="PIR" id="AF2732">
    <property type="entry name" value="AF2732"/>
</dbReference>
<dbReference type="PIR" id="H97513">
    <property type="entry name" value="H97513"/>
</dbReference>
<dbReference type="RefSeq" id="NP_354280.1">
    <property type="nucleotide sequence ID" value="NC_003062.2"/>
</dbReference>
<dbReference type="RefSeq" id="WP_006312713.1">
    <property type="nucleotide sequence ID" value="NC_003062.2"/>
</dbReference>
<dbReference type="SMR" id="A9CJB1"/>
<dbReference type="STRING" id="176299.Atu1270"/>
<dbReference type="EnsemblBacteria" id="AAK87065">
    <property type="protein sequence ID" value="AAK87065"/>
    <property type="gene ID" value="Atu1270"/>
</dbReference>
<dbReference type="GeneID" id="1133308"/>
<dbReference type="KEGG" id="atu:Atu1270"/>
<dbReference type="PATRIC" id="fig|176299.10.peg.1287"/>
<dbReference type="eggNOG" id="COG0852">
    <property type="taxonomic scope" value="Bacteria"/>
</dbReference>
<dbReference type="HOGENOM" id="CLU_042628_2_1_5"/>
<dbReference type="OrthoDB" id="9803286at2"/>
<dbReference type="PhylomeDB" id="A9CJB1"/>
<dbReference type="BioCyc" id="AGRO:ATU1270-MONOMER"/>
<dbReference type="Proteomes" id="UP000000813">
    <property type="component" value="Chromosome circular"/>
</dbReference>
<dbReference type="GO" id="GO:0005886">
    <property type="term" value="C:plasma membrane"/>
    <property type="evidence" value="ECO:0007669"/>
    <property type="project" value="UniProtKB-SubCell"/>
</dbReference>
<dbReference type="GO" id="GO:0008137">
    <property type="term" value="F:NADH dehydrogenase (ubiquinone) activity"/>
    <property type="evidence" value="ECO:0007669"/>
    <property type="project" value="InterPro"/>
</dbReference>
<dbReference type="GO" id="GO:0050136">
    <property type="term" value="F:NADH:ubiquinone reductase (non-electrogenic) activity"/>
    <property type="evidence" value="ECO:0007669"/>
    <property type="project" value="UniProtKB-UniRule"/>
</dbReference>
<dbReference type="GO" id="GO:0048038">
    <property type="term" value="F:quinone binding"/>
    <property type="evidence" value="ECO:0007669"/>
    <property type="project" value="UniProtKB-KW"/>
</dbReference>
<dbReference type="Gene3D" id="3.30.460.80">
    <property type="entry name" value="NADH:ubiquinone oxidoreductase, 30kDa subunit"/>
    <property type="match status" value="1"/>
</dbReference>
<dbReference type="HAMAP" id="MF_01357">
    <property type="entry name" value="NDH1_NuoC"/>
    <property type="match status" value="1"/>
</dbReference>
<dbReference type="InterPro" id="IPR010218">
    <property type="entry name" value="NADH_DH_suC"/>
</dbReference>
<dbReference type="InterPro" id="IPR037232">
    <property type="entry name" value="NADH_quin_OxRdtase_su_C/D-like"/>
</dbReference>
<dbReference type="InterPro" id="IPR001268">
    <property type="entry name" value="NADH_UbQ_OxRdtase_30kDa_su"/>
</dbReference>
<dbReference type="InterPro" id="IPR020396">
    <property type="entry name" value="NADH_UbQ_OxRdtase_CS"/>
</dbReference>
<dbReference type="NCBIfam" id="TIGR01961">
    <property type="entry name" value="NuoC_fam"/>
    <property type="match status" value="1"/>
</dbReference>
<dbReference type="NCBIfam" id="NF004733">
    <property type="entry name" value="PRK06074.1-5"/>
    <property type="match status" value="1"/>
</dbReference>
<dbReference type="PANTHER" id="PTHR10884:SF14">
    <property type="entry name" value="NADH DEHYDROGENASE [UBIQUINONE] IRON-SULFUR PROTEIN 3, MITOCHONDRIAL"/>
    <property type="match status" value="1"/>
</dbReference>
<dbReference type="PANTHER" id="PTHR10884">
    <property type="entry name" value="NADH DEHYDROGENASE UBIQUINONE IRON-SULFUR PROTEIN 3"/>
    <property type="match status" value="1"/>
</dbReference>
<dbReference type="Pfam" id="PF00329">
    <property type="entry name" value="Complex1_30kDa"/>
    <property type="match status" value="1"/>
</dbReference>
<dbReference type="SUPFAM" id="SSF143243">
    <property type="entry name" value="Nqo5-like"/>
    <property type="match status" value="1"/>
</dbReference>
<dbReference type="PROSITE" id="PS00542">
    <property type="entry name" value="COMPLEX1_30K"/>
    <property type="match status" value="1"/>
</dbReference>
<feature type="chain" id="PRO_0000358036" description="NADH-quinone oxidoreductase subunit C">
    <location>
        <begin position="1"/>
        <end position="200"/>
    </location>
</feature>
<keyword id="KW-0997">Cell inner membrane</keyword>
<keyword id="KW-1003">Cell membrane</keyword>
<keyword id="KW-0472">Membrane</keyword>
<keyword id="KW-0520">NAD</keyword>
<keyword id="KW-0874">Quinone</keyword>
<keyword id="KW-1185">Reference proteome</keyword>
<keyword id="KW-1278">Translocase</keyword>
<keyword id="KW-0813">Transport</keyword>
<keyword id="KW-0830">Ubiquinone</keyword>
<protein>
    <recommendedName>
        <fullName evidence="1">NADH-quinone oxidoreductase subunit C</fullName>
        <ecNumber evidence="1">7.1.1.-</ecNumber>
    </recommendedName>
    <alternativeName>
        <fullName evidence="1">NADH dehydrogenase I subunit C</fullName>
    </alternativeName>
    <alternativeName>
        <fullName evidence="1">NDH-1 subunit C</fullName>
    </alternativeName>
</protein>
<proteinExistence type="inferred from homology"/>
<name>NUOC_AGRFC</name>